<accession>P56312</accession>
<feature type="chain" id="PRO_0000217602" description="Photosystem I assembly protein Ycf4">
    <location>
        <begin position="1"/>
        <end position="183"/>
    </location>
</feature>
<feature type="transmembrane region" description="Helical" evidence="1">
    <location>
        <begin position="21"/>
        <end position="43"/>
    </location>
</feature>
<feature type="transmembrane region" description="Helical" evidence="1">
    <location>
        <begin position="63"/>
        <end position="85"/>
    </location>
</feature>
<dbReference type="EMBL" id="AB001684">
    <property type="protein sequence ID" value="BAA57888.1"/>
    <property type="molecule type" value="Genomic_DNA"/>
</dbReference>
<dbReference type="PIR" id="T07241">
    <property type="entry name" value="T07241"/>
</dbReference>
<dbReference type="RefSeq" id="NP_045813.1">
    <property type="nucleotide sequence ID" value="NC_001865.1"/>
</dbReference>
<dbReference type="GeneID" id="809185"/>
<dbReference type="GO" id="GO:0009535">
    <property type="term" value="C:chloroplast thylakoid membrane"/>
    <property type="evidence" value="ECO:0007669"/>
    <property type="project" value="UniProtKB-SubCell"/>
</dbReference>
<dbReference type="GO" id="GO:0009522">
    <property type="term" value="C:photosystem I"/>
    <property type="evidence" value="ECO:0007669"/>
    <property type="project" value="InterPro"/>
</dbReference>
<dbReference type="GO" id="GO:0015979">
    <property type="term" value="P:photosynthesis"/>
    <property type="evidence" value="ECO:0007669"/>
    <property type="project" value="UniProtKB-UniRule"/>
</dbReference>
<dbReference type="HAMAP" id="MF_00437">
    <property type="entry name" value="Ycf4"/>
    <property type="match status" value="1"/>
</dbReference>
<dbReference type="InterPro" id="IPR003359">
    <property type="entry name" value="PSI_Ycf4_assembly"/>
</dbReference>
<dbReference type="NCBIfam" id="NF002712">
    <property type="entry name" value="PRK02542.1"/>
    <property type="match status" value="1"/>
</dbReference>
<dbReference type="PANTHER" id="PTHR33288">
    <property type="match status" value="1"/>
</dbReference>
<dbReference type="PANTHER" id="PTHR33288:SF4">
    <property type="entry name" value="PHOTOSYSTEM I ASSEMBLY PROTEIN YCF4"/>
    <property type="match status" value="1"/>
</dbReference>
<dbReference type="Pfam" id="PF02392">
    <property type="entry name" value="Ycf4"/>
    <property type="match status" value="1"/>
</dbReference>
<reference key="1">
    <citation type="journal article" date="1997" name="Proc. Natl. Acad. Sci. U.S.A.">
        <title>Complete nucleotide sequence of the chloroplast genome from the green alga Chlorella vulgaris: the existence of genes possibly involved in chloroplast division.</title>
        <authorList>
            <person name="Wakasugi T."/>
            <person name="Nagai T."/>
            <person name="Kapoor M."/>
            <person name="Sugita M."/>
            <person name="Ito M."/>
            <person name="Ito S."/>
            <person name="Tsudzuki J."/>
            <person name="Nakashima K."/>
            <person name="Tsudzuki T."/>
            <person name="Suzuki Y."/>
            <person name="Hamada A."/>
            <person name="Ohta T."/>
            <person name="Inamura A."/>
            <person name="Yoshinaga K."/>
            <person name="Sugiura M."/>
        </authorList>
    </citation>
    <scope>NUCLEOTIDE SEQUENCE [LARGE SCALE GENOMIC DNA]</scope>
    <source>
        <strain>IAM C-27 / Tamiya</strain>
    </source>
</reference>
<gene>
    <name evidence="1" type="primary">ycf4</name>
</gene>
<evidence type="ECO:0000255" key="1">
    <source>
        <dbReference type="HAMAP-Rule" id="MF_00437"/>
    </source>
</evidence>
<proteinExistence type="inferred from homology"/>
<organism>
    <name type="scientific">Chlorella vulgaris</name>
    <name type="common">Green alga</name>
    <dbReference type="NCBI Taxonomy" id="3077"/>
    <lineage>
        <taxon>Eukaryota</taxon>
        <taxon>Viridiplantae</taxon>
        <taxon>Chlorophyta</taxon>
        <taxon>core chlorophytes</taxon>
        <taxon>Trebouxiophyceae</taxon>
        <taxon>Chlorellales</taxon>
        <taxon>Chlorellaceae</taxon>
        <taxon>Chlorella clade</taxon>
        <taxon>Chlorella</taxon>
    </lineage>
</organism>
<protein>
    <recommendedName>
        <fullName evidence="1">Photosystem I assembly protein Ycf4</fullName>
    </recommendedName>
</protein>
<keyword id="KW-0150">Chloroplast</keyword>
<keyword id="KW-0472">Membrane</keyword>
<keyword id="KW-0602">Photosynthesis</keyword>
<keyword id="KW-0934">Plastid</keyword>
<keyword id="KW-0793">Thylakoid</keyword>
<keyword id="KW-0812">Transmembrane</keyword>
<keyword id="KW-1133">Transmembrane helix</keyword>
<name>YCF4_CHLVU</name>
<geneLocation type="chloroplast"/>
<sequence>MTAQELSIRYEVPGARRFGNYIWGSLMCLGGLGFLTIGISSYLDFPILSLVKSSNIQFFPQGLVMCFYGVLGFLLGVYIWLLILWNLGEGFNEFNLETGYVRIFRWGFPGKNRRIDLQYPIQEIQSIRVEIQEGINPKRIIYLKLRGNREIPLTRAGQPLSIQQIETQAAELAKFLQVSLEGI</sequence>
<comment type="function">
    <text evidence="1">Seems to be required for the assembly of the photosystem I complex.</text>
</comment>
<comment type="subcellular location">
    <subcellularLocation>
        <location evidence="1">Plastid</location>
        <location evidence="1">Chloroplast thylakoid membrane</location>
        <topology evidence="1">Multi-pass membrane protein</topology>
    </subcellularLocation>
</comment>
<comment type="similarity">
    <text evidence="1">Belongs to the Ycf4 family.</text>
</comment>